<feature type="chain" id="PRO_0000229984" description="Tetraacyldisaccharide 4'-kinase">
    <location>
        <begin position="1"/>
        <end position="329"/>
    </location>
</feature>
<feature type="binding site" evidence="1">
    <location>
        <begin position="57"/>
        <end position="64"/>
    </location>
    <ligand>
        <name>ATP</name>
        <dbReference type="ChEBI" id="CHEBI:30616"/>
    </ligand>
</feature>
<reference key="1">
    <citation type="journal article" date="2006" name="J. Bacteriol.">
        <title>The genome sequence of the obligately chemolithoautotrophic, facultatively anaerobic bacterium Thiobacillus denitrificans.</title>
        <authorList>
            <person name="Beller H.R."/>
            <person name="Chain P.S."/>
            <person name="Letain T.E."/>
            <person name="Chakicherla A."/>
            <person name="Larimer F.W."/>
            <person name="Richardson P.M."/>
            <person name="Coleman M.A."/>
            <person name="Wood A.P."/>
            <person name="Kelly D.P."/>
        </authorList>
    </citation>
    <scope>NUCLEOTIDE SEQUENCE [LARGE SCALE GENOMIC DNA]</scope>
    <source>
        <strain>ATCC 25259 / T1</strain>
    </source>
</reference>
<accession>Q3SIR4</accession>
<dbReference type="EC" id="2.7.1.130" evidence="1"/>
<dbReference type="EMBL" id="CP000116">
    <property type="protein sequence ID" value="AAZ97461.1"/>
    <property type="molecule type" value="Genomic_DNA"/>
</dbReference>
<dbReference type="RefSeq" id="WP_011312020.1">
    <property type="nucleotide sequence ID" value="NC_007404.1"/>
</dbReference>
<dbReference type="SMR" id="Q3SIR4"/>
<dbReference type="STRING" id="292415.Tbd_1508"/>
<dbReference type="KEGG" id="tbd:Tbd_1508"/>
<dbReference type="eggNOG" id="COG1663">
    <property type="taxonomic scope" value="Bacteria"/>
</dbReference>
<dbReference type="HOGENOM" id="CLU_038816_2_0_4"/>
<dbReference type="OrthoDB" id="9766423at2"/>
<dbReference type="UniPathway" id="UPA00359">
    <property type="reaction ID" value="UER00482"/>
</dbReference>
<dbReference type="Proteomes" id="UP000008291">
    <property type="component" value="Chromosome"/>
</dbReference>
<dbReference type="GO" id="GO:0005886">
    <property type="term" value="C:plasma membrane"/>
    <property type="evidence" value="ECO:0007669"/>
    <property type="project" value="TreeGrafter"/>
</dbReference>
<dbReference type="GO" id="GO:0005524">
    <property type="term" value="F:ATP binding"/>
    <property type="evidence" value="ECO:0007669"/>
    <property type="project" value="UniProtKB-UniRule"/>
</dbReference>
<dbReference type="GO" id="GO:0009029">
    <property type="term" value="F:tetraacyldisaccharide 4'-kinase activity"/>
    <property type="evidence" value="ECO:0007669"/>
    <property type="project" value="UniProtKB-UniRule"/>
</dbReference>
<dbReference type="GO" id="GO:0009245">
    <property type="term" value="P:lipid A biosynthetic process"/>
    <property type="evidence" value="ECO:0007669"/>
    <property type="project" value="UniProtKB-UniRule"/>
</dbReference>
<dbReference type="GO" id="GO:0009244">
    <property type="term" value="P:lipopolysaccharide core region biosynthetic process"/>
    <property type="evidence" value="ECO:0007669"/>
    <property type="project" value="TreeGrafter"/>
</dbReference>
<dbReference type="HAMAP" id="MF_00409">
    <property type="entry name" value="LpxK"/>
    <property type="match status" value="1"/>
</dbReference>
<dbReference type="InterPro" id="IPR003758">
    <property type="entry name" value="LpxK"/>
</dbReference>
<dbReference type="InterPro" id="IPR027417">
    <property type="entry name" value="P-loop_NTPase"/>
</dbReference>
<dbReference type="NCBIfam" id="TIGR00682">
    <property type="entry name" value="lpxK"/>
    <property type="match status" value="1"/>
</dbReference>
<dbReference type="PANTHER" id="PTHR42724">
    <property type="entry name" value="TETRAACYLDISACCHARIDE 4'-KINASE"/>
    <property type="match status" value="1"/>
</dbReference>
<dbReference type="PANTHER" id="PTHR42724:SF1">
    <property type="entry name" value="TETRAACYLDISACCHARIDE 4'-KINASE, MITOCHONDRIAL-RELATED"/>
    <property type="match status" value="1"/>
</dbReference>
<dbReference type="Pfam" id="PF02606">
    <property type="entry name" value="LpxK"/>
    <property type="match status" value="1"/>
</dbReference>
<dbReference type="SUPFAM" id="SSF52540">
    <property type="entry name" value="P-loop containing nucleoside triphosphate hydrolases"/>
    <property type="match status" value="1"/>
</dbReference>
<sequence>MLSLPRLWTHTGPLTLLLLPVAWFFASLVTVRRLAFRRGWLTRVDVGIPVIVVGNITAGGSGKTPLVIWLTNWLREQGHRPGVVSRGYGGKARRCVELGAESTAAEVGDEPLLIHRKTGAPVVVGRDRPAAARVLRARHPEVDIIVSDDGLQHYRLGRALELAVLDAATGFGNGWPLPAGPLREPFRRLHEVDGVVQVVRGGGAWRTYLGLKTWRADYRAGDARRLRAPEERKPLRALAQREWLAATGIGRPEGFFAMLEAHGVRHRPRAFPDHHAFRPDDLPAGGAVLMTEKDAVKCADFAGPDWWAVDLEVVPEAGFVEWLRTRLGS</sequence>
<keyword id="KW-0067">ATP-binding</keyword>
<keyword id="KW-0418">Kinase</keyword>
<keyword id="KW-0441">Lipid A biosynthesis</keyword>
<keyword id="KW-0444">Lipid biosynthesis</keyword>
<keyword id="KW-0443">Lipid metabolism</keyword>
<keyword id="KW-0547">Nucleotide-binding</keyword>
<keyword id="KW-1185">Reference proteome</keyword>
<keyword id="KW-0808">Transferase</keyword>
<organism>
    <name type="scientific">Thiobacillus denitrificans (strain ATCC 25259 / T1)</name>
    <dbReference type="NCBI Taxonomy" id="292415"/>
    <lineage>
        <taxon>Bacteria</taxon>
        <taxon>Pseudomonadati</taxon>
        <taxon>Pseudomonadota</taxon>
        <taxon>Betaproteobacteria</taxon>
        <taxon>Nitrosomonadales</taxon>
        <taxon>Thiobacillaceae</taxon>
        <taxon>Thiobacillus</taxon>
    </lineage>
</organism>
<gene>
    <name evidence="1" type="primary">lpxK</name>
    <name type="ordered locus">Tbd_1508</name>
</gene>
<protein>
    <recommendedName>
        <fullName evidence="1">Tetraacyldisaccharide 4'-kinase</fullName>
        <ecNumber evidence="1">2.7.1.130</ecNumber>
    </recommendedName>
    <alternativeName>
        <fullName evidence="1">Lipid A 4'-kinase</fullName>
    </alternativeName>
</protein>
<comment type="function">
    <text evidence="1">Transfers the gamma-phosphate of ATP to the 4'-position of a tetraacyldisaccharide 1-phosphate intermediate (termed DS-1-P) to form tetraacyldisaccharide 1,4'-bis-phosphate (lipid IVA).</text>
</comment>
<comment type="catalytic activity">
    <reaction evidence="1">
        <text>a lipid A disaccharide + ATP = a lipid IVA + ADP + H(+)</text>
        <dbReference type="Rhea" id="RHEA:67840"/>
        <dbReference type="ChEBI" id="CHEBI:15378"/>
        <dbReference type="ChEBI" id="CHEBI:30616"/>
        <dbReference type="ChEBI" id="CHEBI:176343"/>
        <dbReference type="ChEBI" id="CHEBI:176425"/>
        <dbReference type="ChEBI" id="CHEBI:456216"/>
        <dbReference type="EC" id="2.7.1.130"/>
    </reaction>
</comment>
<comment type="pathway">
    <text evidence="1">Glycolipid biosynthesis; lipid IV(A) biosynthesis; lipid IV(A) from (3R)-3-hydroxytetradecanoyl-[acyl-carrier-protein] and UDP-N-acetyl-alpha-D-glucosamine: step 6/6.</text>
</comment>
<comment type="similarity">
    <text evidence="1">Belongs to the LpxK family.</text>
</comment>
<name>LPXK_THIDA</name>
<proteinExistence type="inferred from homology"/>
<evidence type="ECO:0000255" key="1">
    <source>
        <dbReference type="HAMAP-Rule" id="MF_00409"/>
    </source>
</evidence>